<proteinExistence type="inferred from homology"/>
<sequence>MGISNFASICSRTPLPLCSVIKSTTHLVLSNSTKIHDFDPQHLNIGILPKCYARSIDIANTTIFGIGNAFINIAALGVILIILYNIRQKYTAIGRSEYLYFFQLTLLLIIFTLIVNCGVSPPGSNSFPYFVAVQIGLAGACCWTLLINGFLGFNLWEDGTTKSMLLVRGFSLCGFMANFLASILTFRTWIENHEIPNTNTTALFVVVYLWNLINLFIFVICQLFVSFFIVRNLWVTGAVLLGVFFFVAGQILTYGFSSQICEGVKHYLDGLFFGSICNIFTLMMVYKTWDITTDDDLEFSVSIDKNGDVLYN</sequence>
<evidence type="ECO:0000250" key="1"/>
<evidence type="ECO:0000255" key="2"/>
<evidence type="ECO:0000305" key="3"/>
<organism>
    <name type="scientific">Candida glabrata (strain ATCC 2001 / BCRC 20586 / JCM 3761 / NBRC 0622 / NRRL Y-65 / CBS 138)</name>
    <name type="common">Yeast</name>
    <name type="synonym">Nakaseomyces glabratus</name>
    <dbReference type="NCBI Taxonomy" id="284593"/>
    <lineage>
        <taxon>Eukaryota</taxon>
        <taxon>Fungi</taxon>
        <taxon>Dikarya</taxon>
        <taxon>Ascomycota</taxon>
        <taxon>Saccharomycotina</taxon>
        <taxon>Saccharomycetes</taxon>
        <taxon>Saccharomycetales</taxon>
        <taxon>Saccharomycetaceae</taxon>
        <taxon>Nakaseomyces</taxon>
    </lineage>
</organism>
<accession>Q6FT25</accession>
<reference key="1">
    <citation type="journal article" date="2004" name="Nature">
        <title>Genome evolution in yeasts.</title>
        <authorList>
            <person name="Dujon B."/>
            <person name="Sherman D."/>
            <person name="Fischer G."/>
            <person name="Durrens P."/>
            <person name="Casaregola S."/>
            <person name="Lafontaine I."/>
            <person name="de Montigny J."/>
            <person name="Marck C."/>
            <person name="Neuveglise C."/>
            <person name="Talla E."/>
            <person name="Goffard N."/>
            <person name="Frangeul L."/>
            <person name="Aigle M."/>
            <person name="Anthouard V."/>
            <person name="Babour A."/>
            <person name="Barbe V."/>
            <person name="Barnay S."/>
            <person name="Blanchin S."/>
            <person name="Beckerich J.-M."/>
            <person name="Beyne E."/>
            <person name="Bleykasten C."/>
            <person name="Boisrame A."/>
            <person name="Boyer J."/>
            <person name="Cattolico L."/>
            <person name="Confanioleri F."/>
            <person name="de Daruvar A."/>
            <person name="Despons L."/>
            <person name="Fabre E."/>
            <person name="Fairhead C."/>
            <person name="Ferry-Dumazet H."/>
            <person name="Groppi A."/>
            <person name="Hantraye F."/>
            <person name="Hennequin C."/>
            <person name="Jauniaux N."/>
            <person name="Joyet P."/>
            <person name="Kachouri R."/>
            <person name="Kerrest A."/>
            <person name="Koszul R."/>
            <person name="Lemaire M."/>
            <person name="Lesur I."/>
            <person name="Ma L."/>
            <person name="Muller H."/>
            <person name="Nicaud J.-M."/>
            <person name="Nikolski M."/>
            <person name="Oztas S."/>
            <person name="Ozier-Kalogeropoulos O."/>
            <person name="Pellenz S."/>
            <person name="Potier S."/>
            <person name="Richard G.-F."/>
            <person name="Straub M.-L."/>
            <person name="Suleau A."/>
            <person name="Swennen D."/>
            <person name="Tekaia F."/>
            <person name="Wesolowski-Louvel M."/>
            <person name="Westhof E."/>
            <person name="Wirth B."/>
            <person name="Zeniou-Meyer M."/>
            <person name="Zivanovic Y."/>
            <person name="Bolotin-Fukuhara M."/>
            <person name="Thierry A."/>
            <person name="Bouchier C."/>
            <person name="Caudron B."/>
            <person name="Scarpelli C."/>
            <person name="Gaillardin C."/>
            <person name="Weissenbach J."/>
            <person name="Wincker P."/>
            <person name="Souciet J.-L."/>
        </authorList>
    </citation>
    <scope>NUCLEOTIDE SEQUENCE [LARGE SCALE GENOMIC DNA]</scope>
    <source>
        <strain>ATCC 2001 / BCRC 20586 / JCM 3761 / NBRC 0622 / NRRL Y-65 / CBS 138</strain>
    </source>
</reference>
<comment type="function">
    <text evidence="1">Chaperone required for the export of the chitin synthase CHS3 from the endoplasmic reticulum.</text>
</comment>
<comment type="subunit">
    <text evidence="1">Interacts with CHS3.</text>
</comment>
<comment type="subcellular location">
    <subcellularLocation>
        <location evidence="1">Endoplasmic reticulum membrane</location>
        <topology evidence="1">Multi-pass membrane protein</topology>
    </subcellularLocation>
</comment>
<comment type="similarity">
    <text evidence="3">Belongs to the CHS7 family.</text>
</comment>
<protein>
    <recommendedName>
        <fullName>Chitin synthase export chaperone</fullName>
    </recommendedName>
</protein>
<feature type="chain" id="PRO_0000280572" description="Chitin synthase export chaperone">
    <location>
        <begin position="1"/>
        <end position="312"/>
    </location>
</feature>
<feature type="transmembrane region" description="Helical" evidence="2">
    <location>
        <begin position="63"/>
        <end position="83"/>
    </location>
</feature>
<feature type="transmembrane region" description="Helical" evidence="2">
    <location>
        <begin position="99"/>
        <end position="119"/>
    </location>
</feature>
<feature type="transmembrane region" description="Helical" evidence="2">
    <location>
        <begin position="127"/>
        <end position="147"/>
    </location>
</feature>
<feature type="transmembrane region" description="Helical" evidence="2">
    <location>
        <begin position="164"/>
        <end position="184"/>
    </location>
</feature>
<feature type="transmembrane region" description="Helical" evidence="2">
    <location>
        <begin position="201"/>
        <end position="221"/>
    </location>
</feature>
<feature type="transmembrane region" description="Helical" evidence="2">
    <location>
        <begin position="233"/>
        <end position="253"/>
    </location>
</feature>
<feature type="transmembrane region" description="Helical" evidence="2">
    <location>
        <begin position="266"/>
        <end position="286"/>
    </location>
</feature>
<name>CHS7_CANGA</name>
<keyword id="KW-0961">Cell wall biogenesis/degradation</keyword>
<keyword id="KW-0256">Endoplasmic reticulum</keyword>
<keyword id="KW-0472">Membrane</keyword>
<keyword id="KW-0653">Protein transport</keyword>
<keyword id="KW-1185">Reference proteome</keyword>
<keyword id="KW-0812">Transmembrane</keyword>
<keyword id="KW-1133">Transmembrane helix</keyword>
<keyword id="KW-0813">Transport</keyword>
<dbReference type="EMBL" id="CR380953">
    <property type="protein sequence ID" value="CAG59546.1"/>
    <property type="molecule type" value="Genomic_DNA"/>
</dbReference>
<dbReference type="RefSeq" id="XP_446619.1">
    <property type="nucleotide sequence ID" value="XM_446619.1"/>
</dbReference>
<dbReference type="FunCoup" id="Q6FT25">
    <property type="interactions" value="78"/>
</dbReference>
<dbReference type="STRING" id="284593.Q6FT25"/>
<dbReference type="EnsemblFungi" id="CAGL0G05918g-T">
    <property type="protein sequence ID" value="CAGL0G05918g-T-p1"/>
    <property type="gene ID" value="CAGL0G05918g"/>
</dbReference>
<dbReference type="KEGG" id="cgr:2888407"/>
<dbReference type="CGD" id="CAL0137563">
    <property type="gene designation" value="CAGL0G05918g"/>
</dbReference>
<dbReference type="VEuPathDB" id="FungiDB:CAGL0G05918g"/>
<dbReference type="eggNOG" id="ENOG502QRVH">
    <property type="taxonomic scope" value="Eukaryota"/>
</dbReference>
<dbReference type="HOGENOM" id="CLU_050424_1_1_1"/>
<dbReference type="InParanoid" id="Q6FT25"/>
<dbReference type="Proteomes" id="UP000002428">
    <property type="component" value="Chromosome G"/>
</dbReference>
<dbReference type="GO" id="GO:0005935">
    <property type="term" value="C:cellular bud neck"/>
    <property type="evidence" value="ECO:0007669"/>
    <property type="project" value="EnsemblFungi"/>
</dbReference>
<dbReference type="GO" id="GO:0005789">
    <property type="term" value="C:endoplasmic reticulum membrane"/>
    <property type="evidence" value="ECO:0007669"/>
    <property type="project" value="UniProtKB-SubCell"/>
</dbReference>
<dbReference type="GO" id="GO:0051082">
    <property type="term" value="F:unfolded protein binding"/>
    <property type="evidence" value="ECO:0007669"/>
    <property type="project" value="EnsemblFungi"/>
</dbReference>
<dbReference type="GO" id="GO:0071555">
    <property type="term" value="P:cell wall organization"/>
    <property type="evidence" value="ECO:0007669"/>
    <property type="project" value="UniProtKB-KW"/>
</dbReference>
<dbReference type="GO" id="GO:0006031">
    <property type="term" value="P:chitin biosynthetic process"/>
    <property type="evidence" value="ECO:0007669"/>
    <property type="project" value="EnsemblFungi"/>
</dbReference>
<dbReference type="GO" id="GO:0006888">
    <property type="term" value="P:endoplasmic reticulum to Golgi vesicle-mediated transport"/>
    <property type="evidence" value="ECO:0007669"/>
    <property type="project" value="EnsemblFungi"/>
</dbReference>
<dbReference type="GO" id="GO:0006457">
    <property type="term" value="P:protein folding"/>
    <property type="evidence" value="ECO:0007669"/>
    <property type="project" value="EnsemblFungi"/>
</dbReference>
<dbReference type="GO" id="GO:0015031">
    <property type="term" value="P:protein transport"/>
    <property type="evidence" value="ECO:0007669"/>
    <property type="project" value="UniProtKB-KW"/>
</dbReference>
<dbReference type="InterPro" id="IPR022057">
    <property type="entry name" value="Chs7"/>
</dbReference>
<dbReference type="PANTHER" id="PTHR35329">
    <property type="entry name" value="CHITIN SYNTHASE EXPORT CHAPERONE"/>
    <property type="match status" value="1"/>
</dbReference>
<dbReference type="PANTHER" id="PTHR35329:SF2">
    <property type="entry name" value="CHITIN SYNTHASE EXPORT CHAPERONE"/>
    <property type="match status" value="1"/>
</dbReference>
<dbReference type="Pfam" id="PF12271">
    <property type="entry name" value="Chs7"/>
    <property type="match status" value="1"/>
</dbReference>
<gene>
    <name type="primary">CHS7</name>
    <name type="ordered locus">CAGL0G05918g</name>
</gene>